<comment type="function">
    <text evidence="2 5">Glycosyltransferase involved in the biosynthesis of the core oligosaccharide region of lipooligosaccharide (LOS) (PubMed:9916106). Catalyzes the addition of a heptose unit to the heptosyl-Kdo2-lipid A module (Probable).</text>
</comment>
<comment type="catalytic activity">
    <reaction evidence="1">
        <text>an L-alpha-D-Hep-(1-&gt;5)-[alpha-Kdo-(2-&gt;4)]-alpha-Kdo-(2-&gt;6)-lipid A + ADP-L-glycero-beta-D-manno-heptose = an L-alpha-D-Hep-(1-&gt;3)-L-alpha-D-Hep-(1-&gt;5)-[alpha-Kdo-(2-&gt;4)]-alpha-Kdo-(2-&gt;6)-lipid A + ADP + H(+)</text>
        <dbReference type="Rhea" id="RHEA:74071"/>
        <dbReference type="ChEBI" id="CHEBI:15378"/>
        <dbReference type="ChEBI" id="CHEBI:61506"/>
        <dbReference type="ChEBI" id="CHEBI:193068"/>
        <dbReference type="ChEBI" id="CHEBI:193069"/>
        <dbReference type="ChEBI" id="CHEBI:456216"/>
        <dbReference type="EC" id="2.4.99.24"/>
    </reaction>
</comment>
<comment type="pathway">
    <text evidence="2">Bacterial outer membrane biogenesis; LOS core biosynthesis.</text>
</comment>
<comment type="disruption phenotype">
    <text evidence="2">Mutant synthesizes a truncated LOS molecule and becomes attenuated in an animal model for experimental chancroid.</text>
</comment>
<comment type="miscellaneous">
    <text evidence="2">Can complement a S.typhimurium mutant lacking waaF.</text>
</comment>
<comment type="similarity">
    <text evidence="4">Belongs to the glycosyltransferase 9 family.</text>
</comment>
<comment type="sequence caution" evidence="4">
    <conflict type="erroneous initiation">
        <sequence resource="EMBL-CDS" id="AAP95578"/>
    </conflict>
    <text>Truncated N-terminus.</text>
</comment>
<accession>Q7VNA4</accession>
<accession>Q9Z6D3</accession>
<evidence type="ECO:0000250" key="1">
    <source>
        <dbReference type="UniProtKB" id="P37692"/>
    </source>
</evidence>
<evidence type="ECO:0000269" key="2">
    <source>
    </source>
</evidence>
<evidence type="ECO:0000303" key="3">
    <source>
    </source>
</evidence>
<evidence type="ECO:0000305" key="4"/>
<evidence type="ECO:0000305" key="5">
    <source>
    </source>
</evidence>
<evidence type="ECO:0000312" key="6">
    <source>
        <dbReference type="EMBL" id="AAP95578.1"/>
    </source>
</evidence>
<name>WAAF_HAEDU</name>
<protein>
    <recommendedName>
        <fullName evidence="4">Lipooligosaccharide heptosyltransferase 2</fullName>
        <ecNumber evidence="1">2.4.99.24</ecNumber>
    </recommendedName>
    <alternativeName>
        <fullName evidence="4">ADP-heptose:lipooligosaccharide heptosyltransferase II</fullName>
        <shortName evidence="4">ADP-heptose:LOS heptosyltransferase II</shortName>
        <shortName evidence="4">Heptosyltransferase II</shortName>
    </alternativeName>
</protein>
<keyword id="KW-0328">Glycosyltransferase</keyword>
<keyword id="KW-1185">Reference proteome</keyword>
<keyword id="KW-0808">Transferase</keyword>
<dbReference type="EC" id="2.4.99.24" evidence="1"/>
<dbReference type="EMBL" id="AF087414">
    <property type="protein sequence ID" value="AAD16056.1"/>
    <property type="molecule type" value="Genomic_DNA"/>
</dbReference>
<dbReference type="EMBL" id="AE017143">
    <property type="protein sequence ID" value="AAP95578.1"/>
    <property type="status" value="ALT_INIT"/>
    <property type="molecule type" value="Genomic_DNA"/>
</dbReference>
<dbReference type="RefSeq" id="WP_041603398.1">
    <property type="nucleotide sequence ID" value="NC_002940.2"/>
</dbReference>
<dbReference type="SMR" id="Q7VNA4"/>
<dbReference type="STRING" id="233412.HD_0653"/>
<dbReference type="CAZy" id="GT9">
    <property type="family name" value="Glycosyltransferase Family 9"/>
</dbReference>
<dbReference type="KEGG" id="hdu:HD_0653"/>
<dbReference type="PATRIC" id="fig|730.10.peg.540"/>
<dbReference type="eggNOG" id="COG0859">
    <property type="taxonomic scope" value="Bacteria"/>
</dbReference>
<dbReference type="HOGENOM" id="CLU_038371_7_0_6"/>
<dbReference type="UniPathway" id="UPA00976"/>
<dbReference type="Proteomes" id="UP000001022">
    <property type="component" value="Chromosome"/>
</dbReference>
<dbReference type="GO" id="GO:0005829">
    <property type="term" value="C:cytosol"/>
    <property type="evidence" value="ECO:0007669"/>
    <property type="project" value="TreeGrafter"/>
</dbReference>
<dbReference type="GO" id="GO:0008713">
    <property type="term" value="F:ADP-heptose-lipopolysaccharide heptosyltransferase activity"/>
    <property type="evidence" value="ECO:0007669"/>
    <property type="project" value="TreeGrafter"/>
</dbReference>
<dbReference type="GO" id="GO:0009244">
    <property type="term" value="P:lipopolysaccharide core region biosynthetic process"/>
    <property type="evidence" value="ECO:0007669"/>
    <property type="project" value="TreeGrafter"/>
</dbReference>
<dbReference type="CDD" id="cd03789">
    <property type="entry name" value="GT9_LPS_heptosyltransferase"/>
    <property type="match status" value="1"/>
</dbReference>
<dbReference type="FunFam" id="3.40.50.2000:FF:000022">
    <property type="entry name" value="ADP-heptose--LPS heptosyltransferase II"/>
    <property type="match status" value="1"/>
</dbReference>
<dbReference type="FunFam" id="3.40.50.2000:FF:000023">
    <property type="entry name" value="ADP-heptose--LPS heptosyltransferase II"/>
    <property type="match status" value="1"/>
</dbReference>
<dbReference type="Gene3D" id="3.40.50.2000">
    <property type="entry name" value="Glycogen Phosphorylase B"/>
    <property type="match status" value="2"/>
</dbReference>
<dbReference type="InterPro" id="IPR002201">
    <property type="entry name" value="Glyco_trans_9"/>
</dbReference>
<dbReference type="InterPro" id="IPR051199">
    <property type="entry name" value="LPS_LOS_Heptosyltrfase"/>
</dbReference>
<dbReference type="InterPro" id="IPR011910">
    <property type="entry name" value="RfaF"/>
</dbReference>
<dbReference type="NCBIfam" id="TIGR02195">
    <property type="entry name" value="heptsyl_trn_II"/>
    <property type="match status" value="1"/>
</dbReference>
<dbReference type="PANTHER" id="PTHR30160:SF7">
    <property type="entry name" value="ADP-HEPTOSE--LPS HEPTOSYLTRANSFERASE 2"/>
    <property type="match status" value="1"/>
</dbReference>
<dbReference type="PANTHER" id="PTHR30160">
    <property type="entry name" value="TETRAACYLDISACCHARIDE 4'-KINASE-RELATED"/>
    <property type="match status" value="1"/>
</dbReference>
<dbReference type="Pfam" id="PF01075">
    <property type="entry name" value="Glyco_transf_9"/>
    <property type="match status" value="1"/>
</dbReference>
<dbReference type="SUPFAM" id="SSF53756">
    <property type="entry name" value="UDP-Glycosyltransferase/glycogen phosphorylase"/>
    <property type="match status" value="1"/>
</dbReference>
<sequence length="348" mass="39157">MKILIIGPSWVGDMVMSHSLYQQLKQQYPKSQIDVMAPDWCRPLLARMPEVHKAITMPIGHGAFRLMERYQIGKSLRNQYDLAIVLPNSFKSAFIPFFARIAHRRGWKGESRYCLLNDLRTNKNDYPMMVQRYVALAFEATQVPKPDDLPIAFPYLQTQADEIAQTKAKFAQKLTATENRPLIGFCPGAEFGPAKRWPHYHYAKLAEILIEKGFAICLFGSKKDQIIAEQIRLGLAEHSQRYCINLAGQTDLNQAVDLIADCRAIVSNDSGLMHIAAALNKPKPLVALYGPTSPSYTPPLSKQAVIIRLIDGGLIKIRKGEAKEGYHQSLIDITPDRVVQELNQLLAC</sequence>
<feature type="chain" id="PRO_0000459174" description="Lipooligosaccharide heptosyltransferase 2">
    <location>
        <begin position="1"/>
        <end position="348"/>
    </location>
</feature>
<proteinExistence type="inferred from homology"/>
<gene>
    <name evidence="3" type="primary">waaF</name>
    <name evidence="3" type="synonym">rfaF</name>
    <name evidence="6" type="ordered locus">HD_0653</name>
</gene>
<organism>
    <name type="scientific">Haemophilus ducreyi (strain 35000HP / ATCC 700724)</name>
    <dbReference type="NCBI Taxonomy" id="233412"/>
    <lineage>
        <taxon>Bacteria</taxon>
        <taxon>Pseudomonadati</taxon>
        <taxon>Pseudomonadota</taxon>
        <taxon>Gammaproteobacteria</taxon>
        <taxon>Pasteurellales</taxon>
        <taxon>Pasteurellaceae</taxon>
        <taxon>Haemophilus</taxon>
    </lineage>
</organism>
<reference key="1">
    <citation type="journal article" date="1999" name="Infect. Immun.">
        <title>Characterization of a WaaF (RfaF) homolog expressed by Haemophilus ducreyi.</title>
        <authorList>
            <person name="Bauer B.A."/>
            <person name="Lumbley S.R."/>
            <person name="Hansen E.J."/>
        </authorList>
    </citation>
    <scope>NUCLEOTIDE SEQUENCE [GENOMIC DNA]</scope>
    <scope>FUNCTION</scope>
    <scope>PATHWAY</scope>
    <scope>DISRUPTION PHENOTYPE</scope>
    <source>
        <strain>35000HP / ATCC 700724</strain>
    </source>
</reference>
<reference key="2">
    <citation type="submission" date="2003-06" db="EMBL/GenBank/DDBJ databases">
        <title>The complete genome sequence of Haemophilus ducreyi.</title>
        <authorList>
            <person name="Munson R.S. Jr."/>
            <person name="Ray W.C."/>
            <person name="Mahairas G."/>
            <person name="Sabo P."/>
            <person name="Mungur R."/>
            <person name="Johnson L."/>
            <person name="Nguyen D."/>
            <person name="Wang J."/>
            <person name="Forst C."/>
            <person name="Hood L."/>
        </authorList>
    </citation>
    <scope>NUCLEOTIDE SEQUENCE [LARGE SCALE GENOMIC DNA]</scope>
    <source>
        <strain>35000HP / ATCC 700724</strain>
    </source>
</reference>